<organism>
    <name type="scientific">Mycoplasma genitalium (strain ATCC 33530 / DSM 19775 / NCTC 10195 / G37)</name>
    <name type="common">Mycoplasmoides genitalium</name>
    <dbReference type="NCBI Taxonomy" id="243273"/>
    <lineage>
        <taxon>Bacteria</taxon>
        <taxon>Bacillati</taxon>
        <taxon>Mycoplasmatota</taxon>
        <taxon>Mycoplasmoidales</taxon>
        <taxon>Mycoplasmoidaceae</taxon>
        <taxon>Mycoplasmoides</taxon>
    </lineage>
</organism>
<name>NADE_MYCGE</name>
<dbReference type="EC" id="6.3.1.5" evidence="1"/>
<dbReference type="EMBL" id="L43967">
    <property type="protein sequence ID" value="AAC71610.1"/>
    <property type="molecule type" value="Genomic_DNA"/>
</dbReference>
<dbReference type="PIR" id="D64242">
    <property type="entry name" value="D64242"/>
</dbReference>
<dbReference type="RefSeq" id="WP_009885944.1">
    <property type="nucleotide sequence ID" value="NC_000908.2"/>
</dbReference>
<dbReference type="SMR" id="P47623"/>
<dbReference type="FunCoup" id="P47623">
    <property type="interactions" value="25"/>
</dbReference>
<dbReference type="STRING" id="243273.MG_383"/>
<dbReference type="GeneID" id="88282567"/>
<dbReference type="KEGG" id="mge:MG_383"/>
<dbReference type="eggNOG" id="COG0171">
    <property type="taxonomic scope" value="Bacteria"/>
</dbReference>
<dbReference type="HOGENOM" id="CLU_059327_1_1_14"/>
<dbReference type="InParanoid" id="P47623"/>
<dbReference type="OrthoDB" id="9803818at2"/>
<dbReference type="BioCyc" id="MGEN243273:G1GJ2-478-MONOMER"/>
<dbReference type="UniPathway" id="UPA00253">
    <property type="reaction ID" value="UER00333"/>
</dbReference>
<dbReference type="Proteomes" id="UP000000807">
    <property type="component" value="Chromosome"/>
</dbReference>
<dbReference type="GO" id="GO:0005737">
    <property type="term" value="C:cytoplasm"/>
    <property type="evidence" value="ECO:0007669"/>
    <property type="project" value="InterPro"/>
</dbReference>
<dbReference type="GO" id="GO:0005524">
    <property type="term" value="F:ATP binding"/>
    <property type="evidence" value="ECO:0007669"/>
    <property type="project" value="UniProtKB-UniRule"/>
</dbReference>
<dbReference type="GO" id="GO:0004359">
    <property type="term" value="F:glutaminase activity"/>
    <property type="evidence" value="ECO:0007669"/>
    <property type="project" value="InterPro"/>
</dbReference>
<dbReference type="GO" id="GO:0046872">
    <property type="term" value="F:metal ion binding"/>
    <property type="evidence" value="ECO:0007669"/>
    <property type="project" value="UniProtKB-KW"/>
</dbReference>
<dbReference type="GO" id="GO:0003952">
    <property type="term" value="F:NAD+ synthase (glutamine-hydrolyzing) activity"/>
    <property type="evidence" value="ECO:0007669"/>
    <property type="project" value="InterPro"/>
</dbReference>
<dbReference type="GO" id="GO:0008795">
    <property type="term" value="F:NAD+ synthase activity"/>
    <property type="evidence" value="ECO:0007669"/>
    <property type="project" value="UniProtKB-UniRule"/>
</dbReference>
<dbReference type="GO" id="GO:0009435">
    <property type="term" value="P:NAD biosynthetic process"/>
    <property type="evidence" value="ECO:0007669"/>
    <property type="project" value="UniProtKB-UniRule"/>
</dbReference>
<dbReference type="CDD" id="cd00553">
    <property type="entry name" value="NAD_synthase"/>
    <property type="match status" value="1"/>
</dbReference>
<dbReference type="FunFam" id="3.40.50.620:FF:000106">
    <property type="entry name" value="Glutamine-dependent NAD(+) synthetase"/>
    <property type="match status" value="1"/>
</dbReference>
<dbReference type="Gene3D" id="3.40.50.620">
    <property type="entry name" value="HUPs"/>
    <property type="match status" value="1"/>
</dbReference>
<dbReference type="HAMAP" id="MF_00193">
    <property type="entry name" value="NadE_ammonia_dep"/>
    <property type="match status" value="1"/>
</dbReference>
<dbReference type="InterPro" id="IPR022310">
    <property type="entry name" value="NAD/GMP_synthase"/>
</dbReference>
<dbReference type="InterPro" id="IPR003694">
    <property type="entry name" value="NAD_synthase"/>
</dbReference>
<dbReference type="InterPro" id="IPR022926">
    <property type="entry name" value="NH(3)-dep_NAD(+)_synth"/>
</dbReference>
<dbReference type="InterPro" id="IPR014729">
    <property type="entry name" value="Rossmann-like_a/b/a_fold"/>
</dbReference>
<dbReference type="NCBIfam" id="TIGR00552">
    <property type="entry name" value="nadE"/>
    <property type="match status" value="1"/>
</dbReference>
<dbReference type="PANTHER" id="PTHR23090:SF9">
    <property type="entry name" value="GLUTAMINE-DEPENDENT NAD(+) SYNTHETASE"/>
    <property type="match status" value="1"/>
</dbReference>
<dbReference type="PANTHER" id="PTHR23090">
    <property type="entry name" value="NH 3 /GLUTAMINE-DEPENDENT NAD + SYNTHETASE"/>
    <property type="match status" value="1"/>
</dbReference>
<dbReference type="Pfam" id="PF02540">
    <property type="entry name" value="NAD_synthase"/>
    <property type="match status" value="1"/>
</dbReference>
<dbReference type="SUPFAM" id="SSF52402">
    <property type="entry name" value="Adenine nucleotide alpha hydrolases-like"/>
    <property type="match status" value="1"/>
</dbReference>
<proteinExistence type="inferred from homology"/>
<accession>P47623</accession>
<reference key="1">
    <citation type="journal article" date="1995" name="Science">
        <title>The minimal gene complement of Mycoplasma genitalium.</title>
        <authorList>
            <person name="Fraser C.M."/>
            <person name="Gocayne J.D."/>
            <person name="White O."/>
            <person name="Adams M.D."/>
            <person name="Clayton R.A."/>
            <person name="Fleischmann R.D."/>
            <person name="Bult C.J."/>
            <person name="Kerlavage A.R."/>
            <person name="Sutton G.G."/>
            <person name="Kelley J.M."/>
            <person name="Fritchman J.L."/>
            <person name="Weidman J.F."/>
            <person name="Small K.V."/>
            <person name="Sandusky M."/>
            <person name="Fuhrmann J.L."/>
            <person name="Nguyen D.T."/>
            <person name="Utterback T.R."/>
            <person name="Saudek D.M."/>
            <person name="Phillips C.A."/>
            <person name="Merrick J.M."/>
            <person name="Tomb J.-F."/>
            <person name="Dougherty B.A."/>
            <person name="Bott K.F."/>
            <person name="Hu P.-C."/>
            <person name="Lucier T.S."/>
            <person name="Peterson S.N."/>
            <person name="Smith H.O."/>
            <person name="Hutchison C.A. III"/>
            <person name="Venter J.C."/>
        </authorList>
    </citation>
    <scope>NUCLEOTIDE SEQUENCE [LARGE SCALE GENOMIC DNA]</scope>
    <source>
        <strain>ATCC 33530 / DSM 19775 / NCTC 10195 / G37</strain>
    </source>
</reference>
<evidence type="ECO:0000255" key="1">
    <source>
        <dbReference type="HAMAP-Rule" id="MF_00193"/>
    </source>
</evidence>
<evidence type="ECO:0000305" key="2"/>
<protein>
    <recommendedName>
        <fullName evidence="1">NH(3)-dependent NAD(+) synthetase</fullName>
        <ecNumber evidence="1">6.3.1.5</ecNumber>
    </recommendedName>
</protein>
<comment type="function">
    <text evidence="1">Catalyzes the ATP-dependent amidation of deamido-NAD to form NAD. Uses ammonia as a nitrogen source.</text>
</comment>
<comment type="catalytic activity">
    <reaction evidence="1">
        <text>deamido-NAD(+) + NH4(+) + ATP = AMP + diphosphate + NAD(+) + H(+)</text>
        <dbReference type="Rhea" id="RHEA:21188"/>
        <dbReference type="ChEBI" id="CHEBI:15378"/>
        <dbReference type="ChEBI" id="CHEBI:28938"/>
        <dbReference type="ChEBI" id="CHEBI:30616"/>
        <dbReference type="ChEBI" id="CHEBI:33019"/>
        <dbReference type="ChEBI" id="CHEBI:57540"/>
        <dbReference type="ChEBI" id="CHEBI:58437"/>
        <dbReference type="ChEBI" id="CHEBI:456215"/>
        <dbReference type="EC" id="6.3.1.5"/>
    </reaction>
</comment>
<comment type="pathway">
    <text evidence="1">Cofactor biosynthesis; NAD(+) biosynthesis; NAD(+) from deamido-NAD(+) (ammonia route): step 1/1.</text>
</comment>
<comment type="subunit">
    <text evidence="1">Homodimer.</text>
</comment>
<comment type="similarity">
    <text evidence="1 2">Belongs to the NAD synthetase family.</text>
</comment>
<feature type="chain" id="PRO_0000152180" description="NH(3)-dependent NAD(+) synthetase">
    <location>
        <begin position="1"/>
        <end position="248"/>
    </location>
</feature>
<feature type="binding site" evidence="1">
    <location>
        <begin position="30"/>
        <end position="37"/>
    </location>
    <ligand>
        <name>ATP</name>
        <dbReference type="ChEBI" id="CHEBI:30616"/>
    </ligand>
</feature>
<feature type="binding site" evidence="1">
    <location>
        <position position="36"/>
    </location>
    <ligand>
        <name>Mg(2+)</name>
        <dbReference type="ChEBI" id="CHEBI:18420"/>
    </ligand>
</feature>
<feature type="binding site" evidence="1">
    <location>
        <position position="114"/>
    </location>
    <ligand>
        <name>deamido-NAD(+)</name>
        <dbReference type="ChEBI" id="CHEBI:58437"/>
    </ligand>
</feature>
<feature type="binding site" evidence="1">
    <location>
        <position position="134"/>
    </location>
    <ligand>
        <name>ATP</name>
        <dbReference type="ChEBI" id="CHEBI:30616"/>
    </ligand>
</feature>
<feature type="binding site" evidence="1">
    <location>
        <position position="139"/>
    </location>
    <ligand>
        <name>Mg(2+)</name>
        <dbReference type="ChEBI" id="CHEBI:18420"/>
    </ligand>
</feature>
<feature type="binding site" evidence="1">
    <location>
        <position position="147"/>
    </location>
    <ligand>
        <name>deamido-NAD(+)</name>
        <dbReference type="ChEBI" id="CHEBI:58437"/>
    </ligand>
</feature>
<feature type="binding site" evidence="1">
    <location>
        <position position="154"/>
    </location>
    <ligand>
        <name>deamido-NAD(+)</name>
        <dbReference type="ChEBI" id="CHEBI:58437"/>
    </ligand>
</feature>
<feature type="binding site" evidence="1">
    <location>
        <position position="163"/>
    </location>
    <ligand>
        <name>ATP</name>
        <dbReference type="ChEBI" id="CHEBI:30616"/>
    </ligand>
</feature>
<feature type="binding site" evidence="1">
    <location>
        <position position="185"/>
    </location>
    <ligand>
        <name>ATP</name>
        <dbReference type="ChEBI" id="CHEBI:30616"/>
    </ligand>
</feature>
<feature type="binding site" evidence="1">
    <location>
        <begin position="232"/>
        <end position="233"/>
    </location>
    <ligand>
        <name>deamido-NAD(+)</name>
        <dbReference type="ChEBI" id="CHEBI:58437"/>
    </ligand>
</feature>
<sequence>MTNLIKYLKELQNWLFDYVKKSKAKGVIFGLSGGIDSAVVAAIAKETFGFENHLALIMHINNSKLDFQATSELVKKMQFNSINIELEESFNLLVKTLGIDPKKDFLTAGNIKARLRMITLYAYAQKHNFLVLGTGNFVEYTLGYFTKWGDGACDIAPLAWLLKEDVYKLAKHFNIPEIVITRAPTASLFEGQTDETEMGITYKELDQYLKGDLILSSEKQKIVLDLKAKAEHKHNSPLKFKHLYNFQN</sequence>
<keyword id="KW-0067">ATP-binding</keyword>
<keyword id="KW-0436">Ligase</keyword>
<keyword id="KW-0460">Magnesium</keyword>
<keyword id="KW-0479">Metal-binding</keyword>
<keyword id="KW-0520">NAD</keyword>
<keyword id="KW-0547">Nucleotide-binding</keyword>
<keyword id="KW-1185">Reference proteome</keyword>
<gene>
    <name evidence="1" type="primary">nadE</name>
    <name type="ordered locus">MG383</name>
</gene>